<accession>P9WMN6</accession>
<accession>L0TDG4</accession>
<accession>Q6MWZ9</accession>
<accession>Q7D5X9</accession>
<name>MOEZ_MYCTO</name>
<protein>
    <recommendedName>
        <fullName>Probable adenylyltransferase/sulfurtransferase MoeZ</fullName>
    </recommendedName>
    <domain>
        <recommendedName>
            <fullName>Sulfur carrier protein CysO adenylyltransferase</fullName>
            <ecNumber>2.7.7.-</ecNumber>
        </recommendedName>
    </domain>
    <domain>
        <recommendedName>
            <fullName>Sulfur carrier protein CysO sulfurtransferase</fullName>
            <ecNumber>2.8.1.-</ecNumber>
        </recommendedName>
    </domain>
</protein>
<organism>
    <name type="scientific">Mycobacterium tuberculosis (strain CDC 1551 / Oshkosh)</name>
    <dbReference type="NCBI Taxonomy" id="83331"/>
    <lineage>
        <taxon>Bacteria</taxon>
        <taxon>Bacillati</taxon>
        <taxon>Actinomycetota</taxon>
        <taxon>Actinomycetes</taxon>
        <taxon>Mycobacteriales</taxon>
        <taxon>Mycobacteriaceae</taxon>
        <taxon>Mycobacterium</taxon>
        <taxon>Mycobacterium tuberculosis complex</taxon>
    </lineage>
</organism>
<keyword id="KW-0067">ATP-binding</keyword>
<keyword id="KW-0472">Membrane</keyword>
<keyword id="KW-0511">Multifunctional enzyme</keyword>
<keyword id="KW-0547">Nucleotide-binding</keyword>
<keyword id="KW-0548">Nucleotidyltransferase</keyword>
<keyword id="KW-1185">Reference proteome</keyword>
<keyword id="KW-0808">Transferase</keyword>
<keyword id="KW-0812">Transmembrane</keyword>
<keyword id="KW-1133">Transmembrane helix</keyword>
<feature type="chain" id="PRO_0000427272" description="Probable adenylyltransferase/sulfurtransferase MoeZ">
    <location>
        <begin position="1"/>
        <end position="392"/>
    </location>
</feature>
<feature type="transmembrane region" description="Helical" evidence="2">
    <location>
        <begin position="45"/>
        <end position="65"/>
    </location>
</feature>
<feature type="domain" description="Rhodanese" evidence="3">
    <location>
        <begin position="300"/>
        <end position="390"/>
    </location>
</feature>
<feature type="active site" description="Glycyl thioester intermediate; for adenylyltransferase activity" evidence="1">
    <location>
        <position position="203"/>
    </location>
</feature>
<feature type="active site" description="Cysteine persulfide intermediate; for sulfurtransferase activity" evidence="3">
    <location>
        <position position="350"/>
    </location>
</feature>
<feature type="binding site" evidence="1">
    <location>
        <position position="52"/>
    </location>
    <ligand>
        <name>ATP</name>
        <dbReference type="ChEBI" id="CHEBI:30616"/>
    </ligand>
</feature>
<feature type="binding site" evidence="1">
    <location>
        <position position="73"/>
    </location>
    <ligand>
        <name>ATP</name>
        <dbReference type="ChEBI" id="CHEBI:30616"/>
    </ligand>
</feature>
<feature type="binding site" evidence="1">
    <location>
        <begin position="80"/>
        <end position="84"/>
    </location>
    <ligand>
        <name>ATP</name>
        <dbReference type="ChEBI" id="CHEBI:30616"/>
    </ligand>
</feature>
<feature type="binding site" evidence="1">
    <location>
        <position position="97"/>
    </location>
    <ligand>
        <name>ATP</name>
        <dbReference type="ChEBI" id="CHEBI:30616"/>
    </ligand>
</feature>
<feature type="binding site" evidence="1">
    <location>
        <begin position="141"/>
        <end position="142"/>
    </location>
    <ligand>
        <name>ATP</name>
        <dbReference type="ChEBI" id="CHEBI:30616"/>
    </ligand>
</feature>
<gene>
    <name type="primary">moeZ</name>
    <name type="synonym">moeB1</name>
    <name type="ordered locus">MT3301</name>
</gene>
<sequence length="392" mass="42173">MSTSLPPLVEPASALSREEVARYSRHLIIPDLGVDGQKRLKNARVLVIGAGGLGAPTLLYLAAAGVGTIGIVDFDVVDESNLQRQVIHGVADVGRSKAQSARDSIVAINPLIRVRLHELRLAPSNAVDLFKQYDLILDGTDNFATRYLVNDAAVLAGKPYVWGSIYRFEGQASVFWEDAPDGLGVNYRDLYPEPPPPGMVPSCAEGGVLGIICASVASVMGTEAIKLITGIGETLLGRLLVYDALEMSYRTITIRKDPSTPKITELVDYEQFCGVVADDAAQAAKGSTITPRELRDWLDSGRKLALIDVRDPVEWDIVHIDGAQLIPKSLINSGEGLAKLPQDRTAVLYCKTGVRSAEALAAVKKAGFSDAVHLQGGIVAWAKQMQPDMVMY</sequence>
<proteinExistence type="inferred from homology"/>
<dbReference type="EC" id="2.7.7.-"/>
<dbReference type="EC" id="2.8.1.-"/>
<dbReference type="EMBL" id="AE000516">
    <property type="protein sequence ID" value="AAK47644.1"/>
    <property type="molecule type" value="Genomic_DNA"/>
</dbReference>
<dbReference type="PIR" id="G70594">
    <property type="entry name" value="G70594"/>
</dbReference>
<dbReference type="RefSeq" id="WP_003416855.1">
    <property type="nucleotide sequence ID" value="NZ_KK341227.1"/>
</dbReference>
<dbReference type="SMR" id="P9WMN6"/>
<dbReference type="KEGG" id="mtc:MT3301"/>
<dbReference type="PATRIC" id="fig|83331.31.peg.3554"/>
<dbReference type="HOGENOM" id="CLU_013325_1_1_11"/>
<dbReference type="Proteomes" id="UP000001020">
    <property type="component" value="Chromosome"/>
</dbReference>
<dbReference type="GO" id="GO:0005829">
    <property type="term" value="C:cytosol"/>
    <property type="evidence" value="ECO:0007669"/>
    <property type="project" value="TreeGrafter"/>
</dbReference>
<dbReference type="GO" id="GO:0016020">
    <property type="term" value="C:membrane"/>
    <property type="evidence" value="ECO:0007669"/>
    <property type="project" value="UniProtKB-SubCell"/>
</dbReference>
<dbReference type="GO" id="GO:0005524">
    <property type="term" value="F:ATP binding"/>
    <property type="evidence" value="ECO:0007669"/>
    <property type="project" value="UniProtKB-KW"/>
</dbReference>
<dbReference type="GO" id="GO:0016779">
    <property type="term" value="F:nucleotidyltransferase activity"/>
    <property type="evidence" value="ECO:0007669"/>
    <property type="project" value="UniProtKB-KW"/>
</dbReference>
<dbReference type="GO" id="GO:0008146">
    <property type="term" value="F:sulfotransferase activity"/>
    <property type="evidence" value="ECO:0007669"/>
    <property type="project" value="TreeGrafter"/>
</dbReference>
<dbReference type="GO" id="GO:0004792">
    <property type="term" value="F:thiosulfate-cyanide sulfurtransferase activity"/>
    <property type="evidence" value="ECO:0007669"/>
    <property type="project" value="TreeGrafter"/>
</dbReference>
<dbReference type="GO" id="GO:0008641">
    <property type="term" value="F:ubiquitin-like modifier activating enzyme activity"/>
    <property type="evidence" value="ECO:0007669"/>
    <property type="project" value="InterPro"/>
</dbReference>
<dbReference type="CDD" id="cd00158">
    <property type="entry name" value="RHOD"/>
    <property type="match status" value="1"/>
</dbReference>
<dbReference type="CDD" id="cd00757">
    <property type="entry name" value="ThiF_MoeB_HesA_family"/>
    <property type="match status" value="1"/>
</dbReference>
<dbReference type="FunFam" id="3.40.50.720:FF:000033">
    <property type="entry name" value="Adenylyltransferase and sulfurtransferase MOCS3"/>
    <property type="match status" value="1"/>
</dbReference>
<dbReference type="FunFam" id="3.40.250.10:FF:000025">
    <property type="entry name" value="Molybdopterin biosynthesis MoeZ"/>
    <property type="match status" value="1"/>
</dbReference>
<dbReference type="Gene3D" id="3.40.50.720">
    <property type="entry name" value="NAD(P)-binding Rossmann-like Domain"/>
    <property type="match status" value="1"/>
</dbReference>
<dbReference type="Gene3D" id="3.40.250.10">
    <property type="entry name" value="Rhodanese-like domain"/>
    <property type="match status" value="1"/>
</dbReference>
<dbReference type="InterPro" id="IPR001763">
    <property type="entry name" value="Rhodanese-like_dom"/>
</dbReference>
<dbReference type="InterPro" id="IPR036873">
    <property type="entry name" value="Rhodanese-like_dom_sf"/>
</dbReference>
<dbReference type="InterPro" id="IPR045886">
    <property type="entry name" value="ThiF/MoeB/HesA"/>
</dbReference>
<dbReference type="InterPro" id="IPR000594">
    <property type="entry name" value="ThiF_NAD_FAD-bd"/>
</dbReference>
<dbReference type="InterPro" id="IPR035985">
    <property type="entry name" value="Ubiquitin-activating_enz"/>
</dbReference>
<dbReference type="NCBIfam" id="NF004281">
    <property type="entry name" value="PRK05690.1"/>
    <property type="match status" value="1"/>
</dbReference>
<dbReference type="NCBIfam" id="NF005902">
    <property type="entry name" value="PRK07878.1"/>
    <property type="match status" value="1"/>
</dbReference>
<dbReference type="PANTHER" id="PTHR10953:SF102">
    <property type="entry name" value="ADENYLYLTRANSFERASE AND SULFURTRANSFERASE MOCS3"/>
    <property type="match status" value="1"/>
</dbReference>
<dbReference type="PANTHER" id="PTHR10953">
    <property type="entry name" value="UBIQUITIN-ACTIVATING ENZYME E1"/>
    <property type="match status" value="1"/>
</dbReference>
<dbReference type="Pfam" id="PF00581">
    <property type="entry name" value="Rhodanese"/>
    <property type="match status" value="1"/>
</dbReference>
<dbReference type="Pfam" id="PF00899">
    <property type="entry name" value="ThiF"/>
    <property type="match status" value="1"/>
</dbReference>
<dbReference type="SMART" id="SM00450">
    <property type="entry name" value="RHOD"/>
    <property type="match status" value="1"/>
</dbReference>
<dbReference type="SUPFAM" id="SSF69572">
    <property type="entry name" value="Activating enzymes of the ubiquitin-like proteins"/>
    <property type="match status" value="1"/>
</dbReference>
<dbReference type="PROSITE" id="PS50206">
    <property type="entry name" value="RHODANESE_3"/>
    <property type="match status" value="1"/>
</dbReference>
<evidence type="ECO:0000250" key="1"/>
<evidence type="ECO:0000255" key="2"/>
<evidence type="ECO:0000255" key="3">
    <source>
        <dbReference type="PROSITE-ProRule" id="PRU00173"/>
    </source>
</evidence>
<evidence type="ECO:0000305" key="4"/>
<reference key="1">
    <citation type="journal article" date="2002" name="J. Bacteriol.">
        <title>Whole-genome comparison of Mycobacterium tuberculosis clinical and laboratory strains.</title>
        <authorList>
            <person name="Fleischmann R.D."/>
            <person name="Alland D."/>
            <person name="Eisen J.A."/>
            <person name="Carpenter L."/>
            <person name="White O."/>
            <person name="Peterson J.D."/>
            <person name="DeBoy R.T."/>
            <person name="Dodson R.J."/>
            <person name="Gwinn M.L."/>
            <person name="Haft D.H."/>
            <person name="Hickey E.K."/>
            <person name="Kolonay J.F."/>
            <person name="Nelson W.C."/>
            <person name="Umayam L.A."/>
            <person name="Ermolaeva M.D."/>
            <person name="Salzberg S.L."/>
            <person name="Delcher A."/>
            <person name="Utterback T.R."/>
            <person name="Weidman J.F."/>
            <person name="Khouri H.M."/>
            <person name="Gill J."/>
            <person name="Mikula A."/>
            <person name="Bishai W."/>
            <person name="Jacobs W.R. Jr."/>
            <person name="Venter J.C."/>
            <person name="Fraser C.M."/>
        </authorList>
    </citation>
    <scope>NUCLEOTIDE SEQUENCE [LARGE SCALE GENOMIC DNA]</scope>
    <source>
        <strain>CDC 1551 / Oshkosh</strain>
    </source>
</reference>
<comment type="function">
    <text evidence="1">Catalyzes the conversion of the sulfur carrier protein CysO to CysO-thiocarboxylate. The reaction is thought to proceed in two steps: first, ATP-dependent activation of CysO as acyl-adenylate (CysO-COOAMP), followed by sulfur transfer to give CysO-thiocarboxylate (CysO-COSH) (By similarity).</text>
</comment>
<comment type="subcellular location">
    <subcellularLocation>
        <location evidence="4">Membrane</location>
        <topology evidence="4">Single-pass membrane protein</topology>
    </subcellularLocation>
</comment>
<comment type="similarity">
    <text evidence="4">In the N-terminal section; belongs to the HesA/MoeB/ThiF family.</text>
</comment>